<reference key="1">
    <citation type="journal article" date="1999" name="Nature">
        <title>Sequence and analysis of chromosome 2 of the plant Arabidopsis thaliana.</title>
        <authorList>
            <person name="Lin X."/>
            <person name="Kaul S."/>
            <person name="Rounsley S.D."/>
            <person name="Shea T.P."/>
            <person name="Benito M.-I."/>
            <person name="Town C.D."/>
            <person name="Fujii C.Y."/>
            <person name="Mason T.M."/>
            <person name="Bowman C.L."/>
            <person name="Barnstead M.E."/>
            <person name="Feldblyum T.V."/>
            <person name="Buell C.R."/>
            <person name="Ketchum K.A."/>
            <person name="Lee J.J."/>
            <person name="Ronning C.M."/>
            <person name="Koo H.L."/>
            <person name="Moffat K.S."/>
            <person name="Cronin L.A."/>
            <person name="Shen M."/>
            <person name="Pai G."/>
            <person name="Van Aken S."/>
            <person name="Umayam L."/>
            <person name="Tallon L.J."/>
            <person name="Gill J.E."/>
            <person name="Adams M.D."/>
            <person name="Carrera A.J."/>
            <person name="Creasy T.H."/>
            <person name="Goodman H.M."/>
            <person name="Somerville C.R."/>
            <person name="Copenhaver G.P."/>
            <person name="Preuss D."/>
            <person name="Nierman W.C."/>
            <person name="White O."/>
            <person name="Eisen J.A."/>
            <person name="Salzberg S.L."/>
            <person name="Fraser C.M."/>
            <person name="Venter J.C."/>
        </authorList>
    </citation>
    <scope>NUCLEOTIDE SEQUENCE [LARGE SCALE GENOMIC DNA]</scope>
    <source>
        <strain>cv. Columbia</strain>
    </source>
</reference>
<reference key="2">
    <citation type="journal article" date="2017" name="Plant J.">
        <title>Araport11: a complete reannotation of the Arabidopsis thaliana reference genome.</title>
        <authorList>
            <person name="Cheng C.Y."/>
            <person name="Krishnakumar V."/>
            <person name="Chan A.P."/>
            <person name="Thibaud-Nissen F."/>
            <person name="Schobel S."/>
            <person name="Town C.D."/>
        </authorList>
    </citation>
    <scope>GENOME REANNOTATION</scope>
    <source>
        <strain>cv. Columbia</strain>
    </source>
</reference>
<reference key="3">
    <citation type="journal article" date="2003" name="Science">
        <title>Empirical analysis of transcriptional activity in the Arabidopsis genome.</title>
        <authorList>
            <person name="Yamada K."/>
            <person name="Lim J."/>
            <person name="Dale J.M."/>
            <person name="Chen H."/>
            <person name="Shinn P."/>
            <person name="Palm C.J."/>
            <person name="Southwick A.M."/>
            <person name="Wu H.C."/>
            <person name="Kim C.J."/>
            <person name="Nguyen M."/>
            <person name="Pham P.K."/>
            <person name="Cheuk R.F."/>
            <person name="Karlin-Newmann G."/>
            <person name="Liu S.X."/>
            <person name="Lam B."/>
            <person name="Sakano H."/>
            <person name="Wu T."/>
            <person name="Yu G."/>
            <person name="Miranda M."/>
            <person name="Quach H.L."/>
            <person name="Tripp M."/>
            <person name="Chang C.H."/>
            <person name="Lee J.M."/>
            <person name="Toriumi M.J."/>
            <person name="Chan M.M."/>
            <person name="Tang C.C."/>
            <person name="Onodera C.S."/>
            <person name="Deng J.M."/>
            <person name="Akiyama K."/>
            <person name="Ansari Y."/>
            <person name="Arakawa T."/>
            <person name="Banh J."/>
            <person name="Banno F."/>
            <person name="Bowser L."/>
            <person name="Brooks S.Y."/>
            <person name="Carninci P."/>
            <person name="Chao Q."/>
            <person name="Choy N."/>
            <person name="Enju A."/>
            <person name="Goldsmith A.D."/>
            <person name="Gurjal M."/>
            <person name="Hansen N.F."/>
            <person name="Hayashizaki Y."/>
            <person name="Johnson-Hopson C."/>
            <person name="Hsuan V.W."/>
            <person name="Iida K."/>
            <person name="Karnes M."/>
            <person name="Khan S."/>
            <person name="Koesema E."/>
            <person name="Ishida J."/>
            <person name="Jiang P.X."/>
            <person name="Jones T."/>
            <person name="Kawai J."/>
            <person name="Kamiya A."/>
            <person name="Meyers C."/>
            <person name="Nakajima M."/>
            <person name="Narusaka M."/>
            <person name="Seki M."/>
            <person name="Sakurai T."/>
            <person name="Satou M."/>
            <person name="Tamse R."/>
            <person name="Vaysberg M."/>
            <person name="Wallender E.K."/>
            <person name="Wong C."/>
            <person name="Yamamura Y."/>
            <person name="Yuan S."/>
            <person name="Shinozaki K."/>
            <person name="Davis R.W."/>
            <person name="Theologis A."/>
            <person name="Ecker J.R."/>
        </authorList>
    </citation>
    <scope>NUCLEOTIDE SEQUENCE [LARGE SCALE MRNA] (ISOFORM 2)</scope>
    <source>
        <strain>cv. Columbia</strain>
    </source>
</reference>
<reference key="4">
    <citation type="journal article" date="2005" name="Planta">
        <title>Gene structure and molecular analysis of the laccase-like multicopper oxidase (LMCO) gene family in Arabidopsis thaliana.</title>
        <authorList>
            <person name="McCaig B.C."/>
            <person name="Meagher R.B."/>
            <person name="Dean J.F.D."/>
        </authorList>
    </citation>
    <scope>TISSUE SPECIFICITY</scope>
</reference>
<reference key="5">
    <citation type="journal article" date="2006" name="J. Exp. Bot.">
        <title>Mutant identification and characterization of the laccase gene family in Arabidopsis.</title>
        <authorList>
            <person name="Cai X."/>
            <person name="Davis E.J."/>
            <person name="Ballif J."/>
            <person name="Liang M."/>
            <person name="Bushman E."/>
            <person name="Haroldsen V."/>
            <person name="Torabinejad J."/>
            <person name="Wu Y."/>
        </authorList>
    </citation>
    <scope>TISSUE SPECIFICITY</scope>
</reference>
<protein>
    <recommendedName>
        <fullName>Laccase-6</fullName>
        <ecNumber>1.10.3.2</ecNumber>
    </recommendedName>
    <alternativeName>
        <fullName>Benzenediol:oxygen oxidoreductase 6</fullName>
    </alternativeName>
    <alternativeName>
        <fullName>Diphenol oxidase 6</fullName>
    </alternativeName>
    <alternativeName>
        <fullName>Urishiol oxidase 6</fullName>
    </alternativeName>
</protein>
<feature type="signal peptide" evidence="2">
    <location>
        <begin position="1"/>
        <end position="29"/>
    </location>
</feature>
<feature type="chain" id="PRO_0000283634" description="Laccase-6">
    <location>
        <begin position="30"/>
        <end position="569"/>
    </location>
</feature>
<feature type="domain" description="Plastocyanin-like 1">
    <location>
        <begin position="37"/>
        <end position="153"/>
    </location>
</feature>
<feature type="domain" description="Plastocyanin-like 2">
    <location>
        <begin position="163"/>
        <end position="315"/>
    </location>
</feature>
<feature type="domain" description="Plastocyanin-like 3">
    <location>
        <begin position="417"/>
        <end position="553"/>
    </location>
</feature>
<feature type="binding site" description="type 2 copper site" evidence="1">
    <location>
        <position position="87"/>
    </location>
    <ligand>
        <name>Cu cation</name>
        <dbReference type="ChEBI" id="CHEBI:23378"/>
        <label>1</label>
    </ligand>
</feature>
<feature type="binding site" description="type 3 copper site" evidence="1">
    <location>
        <position position="89"/>
    </location>
    <ligand>
        <name>Cu cation</name>
        <dbReference type="ChEBI" id="CHEBI:23378"/>
        <label>2</label>
    </ligand>
</feature>
<feature type="binding site" description="type 3 copper site" evidence="1">
    <location>
        <position position="132"/>
    </location>
    <ligand>
        <name>Cu cation</name>
        <dbReference type="ChEBI" id="CHEBI:23378"/>
        <label>2</label>
    </ligand>
</feature>
<feature type="binding site" description="type 3 copper site" evidence="1">
    <location>
        <position position="134"/>
    </location>
    <ligand>
        <name>Cu cation</name>
        <dbReference type="ChEBI" id="CHEBI:23378"/>
        <label>3</label>
    </ligand>
</feature>
<feature type="binding site" description="type 1 copper site" evidence="1">
    <location>
        <position position="472"/>
    </location>
    <ligand>
        <name>Cu cation</name>
        <dbReference type="ChEBI" id="CHEBI:23378"/>
        <label>4</label>
    </ligand>
</feature>
<feature type="binding site" description="type 2 copper site" evidence="1">
    <location>
        <position position="475"/>
    </location>
    <ligand>
        <name>Cu cation</name>
        <dbReference type="ChEBI" id="CHEBI:23378"/>
        <label>1</label>
    </ligand>
</feature>
<feature type="binding site" description="type 3 copper site" evidence="1">
    <location>
        <position position="477"/>
    </location>
    <ligand>
        <name>Cu cation</name>
        <dbReference type="ChEBI" id="CHEBI:23378"/>
        <label>3</label>
    </ligand>
</feature>
<feature type="binding site" description="type 3 copper site" evidence="1">
    <location>
        <position position="532"/>
    </location>
    <ligand>
        <name>Cu cation</name>
        <dbReference type="ChEBI" id="CHEBI:23378"/>
        <label>3</label>
    </ligand>
</feature>
<feature type="binding site" description="type 1 copper site" evidence="1">
    <location>
        <position position="533"/>
    </location>
    <ligand>
        <name>Cu cation</name>
        <dbReference type="ChEBI" id="CHEBI:23378"/>
        <label>4</label>
    </ligand>
</feature>
<feature type="binding site" description="type 3 copper site" evidence="1">
    <location>
        <position position="534"/>
    </location>
    <ligand>
        <name>Cu cation</name>
        <dbReference type="ChEBI" id="CHEBI:23378"/>
        <label>2</label>
    </ligand>
</feature>
<feature type="binding site" description="type 1 copper site" evidence="1">
    <location>
        <position position="538"/>
    </location>
    <ligand>
        <name>Cu cation</name>
        <dbReference type="ChEBI" id="CHEBI:23378"/>
        <label>4</label>
    </ligand>
</feature>
<feature type="binding site" description="type 1 copper site" evidence="1">
    <location>
        <position position="543"/>
    </location>
    <ligand>
        <name>Cu cation</name>
        <dbReference type="ChEBI" id="CHEBI:23378"/>
        <label>4</label>
    </ligand>
</feature>
<feature type="glycosylation site" description="N-linked (GlcNAc...) asparagine" evidence="2">
    <location>
        <position position="83"/>
    </location>
</feature>
<feature type="glycosylation site" description="N-linked (GlcNAc...) asparagine" evidence="2">
    <location>
        <position position="208"/>
    </location>
</feature>
<feature type="glycosylation site" description="N-linked (GlcNAc...) asparagine" evidence="2">
    <location>
        <position position="303"/>
    </location>
</feature>
<feature type="glycosylation site" description="N-linked (GlcNAc...) asparagine" evidence="2">
    <location>
        <position position="319"/>
    </location>
</feature>
<feature type="glycosylation site" description="N-linked (GlcNAc...) asparagine" evidence="2">
    <location>
        <position position="392"/>
    </location>
</feature>
<feature type="glycosylation site" description="N-linked (GlcNAc...) asparagine" evidence="2">
    <location>
        <position position="438"/>
    </location>
</feature>
<feature type="glycosylation site" description="N-linked (GlcNAc...) asparagine" evidence="2">
    <location>
        <position position="444"/>
    </location>
</feature>
<feature type="splice variant" id="VSP_024345" description="In isoform 2." evidence="5">
    <location>
        <begin position="1"/>
        <end position="235"/>
    </location>
</feature>
<feature type="splice variant" id="VSP_024346" description="In isoform 2." evidence="5">
    <location>
        <begin position="296"/>
        <end position="327"/>
    </location>
</feature>
<feature type="splice variant" id="VSP_024347" description="In isoform 2." evidence="5">
    <original>LWLLHCHFDIHQTWGMSTMFIVKNGKKVQESLPHPPADLPK</original>
    <variation>ILLHKTPKHHNTYDI</variation>
    <location>
        <begin position="528"/>
        <end position="568"/>
    </location>
</feature>
<proteinExistence type="evidence at transcript level"/>
<organism>
    <name type="scientific">Arabidopsis thaliana</name>
    <name type="common">Mouse-ear cress</name>
    <dbReference type="NCBI Taxonomy" id="3702"/>
    <lineage>
        <taxon>Eukaryota</taxon>
        <taxon>Viridiplantae</taxon>
        <taxon>Streptophyta</taxon>
        <taxon>Embryophyta</taxon>
        <taxon>Tracheophyta</taxon>
        <taxon>Spermatophyta</taxon>
        <taxon>Magnoliopsida</taxon>
        <taxon>eudicotyledons</taxon>
        <taxon>Gunneridae</taxon>
        <taxon>Pentapetalae</taxon>
        <taxon>rosids</taxon>
        <taxon>malvids</taxon>
        <taxon>Brassicales</taxon>
        <taxon>Brassicaceae</taxon>
        <taxon>Camelineae</taxon>
        <taxon>Arabidopsis</taxon>
    </lineage>
</organism>
<comment type="function">
    <text evidence="1">Lignin degradation and detoxification of lignin-derived products.</text>
</comment>
<comment type="catalytic activity">
    <reaction>
        <text>4 hydroquinone + O2 = 4 benzosemiquinone + 2 H2O</text>
        <dbReference type="Rhea" id="RHEA:11276"/>
        <dbReference type="ChEBI" id="CHEBI:15377"/>
        <dbReference type="ChEBI" id="CHEBI:15379"/>
        <dbReference type="ChEBI" id="CHEBI:17594"/>
        <dbReference type="ChEBI" id="CHEBI:17977"/>
        <dbReference type="EC" id="1.10.3.2"/>
    </reaction>
</comment>
<comment type="cofactor">
    <cofactor evidence="1">
        <name>Cu cation</name>
        <dbReference type="ChEBI" id="CHEBI:23378"/>
    </cofactor>
    <text evidence="1">Binds 4 Cu cations per monomer.</text>
</comment>
<comment type="subcellular location">
    <subcellularLocation>
        <location evidence="6">Secreted</location>
        <location evidence="6">Extracellular space</location>
        <location evidence="6">Apoplast</location>
    </subcellularLocation>
</comment>
<comment type="alternative products">
    <event type="alternative splicing"/>
    <isoform>
        <id>Q9ZPY2-1</id>
        <name>1</name>
        <sequence type="displayed"/>
    </isoform>
    <isoform>
        <id>Q9ZPY2-2</id>
        <name>2</name>
        <sequence type="described" ref="VSP_024345 VSP_024346 VSP_024347"/>
    </isoform>
</comment>
<comment type="tissue specificity">
    <text evidence="3 4">Predominantly expressed in the inflorescence stem, but not in siliques.</text>
</comment>
<comment type="similarity">
    <text evidence="6">Belongs to the multicopper oxidase family.</text>
</comment>
<evidence type="ECO:0000250" key="1"/>
<evidence type="ECO:0000255" key="2"/>
<evidence type="ECO:0000269" key="3">
    <source>
    </source>
</evidence>
<evidence type="ECO:0000269" key="4">
    <source>
    </source>
</evidence>
<evidence type="ECO:0000303" key="5">
    <source>
    </source>
</evidence>
<evidence type="ECO:0000305" key="6"/>
<accession>Q9ZPY2</accession>
<accession>Q8RY28</accession>
<dbReference type="EC" id="1.10.3.2"/>
<dbReference type="EMBL" id="AC006418">
    <property type="protein sequence ID" value="AAD20177.1"/>
    <property type="molecule type" value="Genomic_DNA"/>
</dbReference>
<dbReference type="EMBL" id="CP002685">
    <property type="protein sequence ID" value="AEC10723.1"/>
    <property type="molecule type" value="Genomic_DNA"/>
</dbReference>
<dbReference type="EMBL" id="AY078937">
    <property type="protein sequence ID" value="AAL84943.1"/>
    <property type="molecule type" value="mRNA"/>
</dbReference>
<dbReference type="PIR" id="E84904">
    <property type="entry name" value="E84904"/>
</dbReference>
<dbReference type="RefSeq" id="NP_182180.1">
    <molecule id="Q9ZPY2-1"/>
    <property type="nucleotide sequence ID" value="NM_130222.2"/>
</dbReference>
<dbReference type="SMR" id="Q9ZPY2"/>
<dbReference type="STRING" id="3702.Q9ZPY2"/>
<dbReference type="GlyCosmos" id="Q9ZPY2">
    <property type="glycosylation" value="7 sites, No reported glycans"/>
</dbReference>
<dbReference type="GlyGen" id="Q9ZPY2">
    <property type="glycosylation" value="7 sites"/>
</dbReference>
<dbReference type="PaxDb" id="3702-AT2G46570.1"/>
<dbReference type="ProteomicsDB" id="237145">
    <molecule id="Q9ZPY2-1"/>
</dbReference>
<dbReference type="EnsemblPlants" id="AT2G46570.1">
    <molecule id="Q9ZPY2-1"/>
    <property type="protein sequence ID" value="AT2G46570.1"/>
    <property type="gene ID" value="AT2G46570"/>
</dbReference>
<dbReference type="GeneID" id="819269"/>
<dbReference type="Gramene" id="AT2G46570.1">
    <molecule id="Q9ZPY2-1"/>
    <property type="protein sequence ID" value="AT2G46570.1"/>
    <property type="gene ID" value="AT2G46570"/>
</dbReference>
<dbReference type="KEGG" id="ath:AT2G46570"/>
<dbReference type="Araport" id="AT2G46570"/>
<dbReference type="TAIR" id="AT2G46570">
    <property type="gene designation" value="LAC6"/>
</dbReference>
<dbReference type="eggNOG" id="KOG1263">
    <property type="taxonomic scope" value="Eukaryota"/>
</dbReference>
<dbReference type="HOGENOM" id="CLU_006504_6_3_1"/>
<dbReference type="InParanoid" id="Q9ZPY2"/>
<dbReference type="OMA" id="QAWQGIF"/>
<dbReference type="PhylomeDB" id="Q9ZPY2"/>
<dbReference type="BioCyc" id="ARA:AT2G46570-MONOMER"/>
<dbReference type="PRO" id="PR:Q9ZPY2"/>
<dbReference type="Proteomes" id="UP000006548">
    <property type="component" value="Chromosome 2"/>
</dbReference>
<dbReference type="ExpressionAtlas" id="Q9ZPY2">
    <property type="expression patterns" value="baseline and differential"/>
</dbReference>
<dbReference type="GO" id="GO:0048046">
    <property type="term" value="C:apoplast"/>
    <property type="evidence" value="ECO:0007669"/>
    <property type="project" value="UniProtKB-SubCell"/>
</dbReference>
<dbReference type="GO" id="GO:0005507">
    <property type="term" value="F:copper ion binding"/>
    <property type="evidence" value="ECO:0007669"/>
    <property type="project" value="InterPro"/>
</dbReference>
<dbReference type="GO" id="GO:0052716">
    <property type="term" value="F:hydroquinone:oxygen oxidoreductase activity"/>
    <property type="evidence" value="ECO:0007669"/>
    <property type="project" value="UniProtKB-EC"/>
</dbReference>
<dbReference type="GO" id="GO:0046274">
    <property type="term" value="P:lignin catabolic process"/>
    <property type="evidence" value="ECO:0007669"/>
    <property type="project" value="UniProtKB-KW"/>
</dbReference>
<dbReference type="CDD" id="cd13849">
    <property type="entry name" value="CuRO_1_LCC_plant"/>
    <property type="match status" value="1"/>
</dbReference>
<dbReference type="CDD" id="cd13875">
    <property type="entry name" value="CuRO_2_LCC_plant"/>
    <property type="match status" value="1"/>
</dbReference>
<dbReference type="CDD" id="cd13897">
    <property type="entry name" value="CuRO_3_LCC_plant"/>
    <property type="match status" value="1"/>
</dbReference>
<dbReference type="Gene3D" id="2.60.40.420">
    <property type="entry name" value="Cupredoxins - blue copper proteins"/>
    <property type="match status" value="3"/>
</dbReference>
<dbReference type="InterPro" id="IPR011707">
    <property type="entry name" value="Cu-oxidase-like_N"/>
</dbReference>
<dbReference type="InterPro" id="IPR001117">
    <property type="entry name" value="Cu-oxidase_2nd"/>
</dbReference>
<dbReference type="InterPro" id="IPR011706">
    <property type="entry name" value="Cu-oxidase_C"/>
</dbReference>
<dbReference type="InterPro" id="IPR045087">
    <property type="entry name" value="Cu-oxidase_fam"/>
</dbReference>
<dbReference type="InterPro" id="IPR033138">
    <property type="entry name" value="Cu_oxidase_CS"/>
</dbReference>
<dbReference type="InterPro" id="IPR002355">
    <property type="entry name" value="Cu_oxidase_Cu_BS"/>
</dbReference>
<dbReference type="InterPro" id="IPR008972">
    <property type="entry name" value="Cupredoxin"/>
</dbReference>
<dbReference type="InterPro" id="IPR034288">
    <property type="entry name" value="CuRO_1_LCC"/>
</dbReference>
<dbReference type="InterPro" id="IPR034285">
    <property type="entry name" value="CuRO_2_LCC"/>
</dbReference>
<dbReference type="InterPro" id="IPR034289">
    <property type="entry name" value="CuRO_3_LCC"/>
</dbReference>
<dbReference type="InterPro" id="IPR017761">
    <property type="entry name" value="Laccase"/>
</dbReference>
<dbReference type="NCBIfam" id="TIGR03389">
    <property type="entry name" value="laccase"/>
    <property type="match status" value="1"/>
</dbReference>
<dbReference type="PANTHER" id="PTHR11709:SF324">
    <property type="entry name" value="LACCASE-6"/>
    <property type="match status" value="1"/>
</dbReference>
<dbReference type="PANTHER" id="PTHR11709">
    <property type="entry name" value="MULTI-COPPER OXIDASE"/>
    <property type="match status" value="1"/>
</dbReference>
<dbReference type="Pfam" id="PF00394">
    <property type="entry name" value="Cu-oxidase"/>
    <property type="match status" value="1"/>
</dbReference>
<dbReference type="Pfam" id="PF07731">
    <property type="entry name" value="Cu-oxidase_2"/>
    <property type="match status" value="1"/>
</dbReference>
<dbReference type="Pfam" id="PF07732">
    <property type="entry name" value="Cu-oxidase_3"/>
    <property type="match status" value="1"/>
</dbReference>
<dbReference type="SUPFAM" id="SSF49503">
    <property type="entry name" value="Cupredoxins"/>
    <property type="match status" value="3"/>
</dbReference>
<dbReference type="PROSITE" id="PS00079">
    <property type="entry name" value="MULTICOPPER_OXIDASE1"/>
    <property type="match status" value="1"/>
</dbReference>
<dbReference type="PROSITE" id="PS00080">
    <property type="entry name" value="MULTICOPPER_OXIDASE2"/>
    <property type="match status" value="1"/>
</dbReference>
<gene>
    <name type="primary">LAC6</name>
    <name type="ordered locus">At2g46570</name>
    <name type="ORF">F13A10.10</name>
</gene>
<name>LAC6_ARATH</name>
<sequence>MTSSAVPSLFRLSFLLFTLQVMNIGRIGAATRFYQFKVQTIRLTRLCQTNEIVTVNKKFPGPAISAQEDDRIVIKVINMTPYNTTIHWHGIKQKRSCWYDGPSYITQCPIQSGQSFTYNFKVAQQKGTFLWHAHFSWLRATVYGPLIVYPKASVPYPFKKPFNEHTILLGEYWLKNVVELEQHVLESGGPPPPADAFTINGQPGPNYNCSSKDVYEIQIVPRKIYLLRLINAGINMETFFTIANHRLTIVEVDGEYTKPYTTERVMLVPGQTMNILVTADQTVGRYSMAMGPYESAKNVKFQNTSAIANFQYIGALPNNVTVPAKLPIFNDNIAVKTVMDGLRSLNAVDVPRNIDAHLFITIGLNVNKCNSENPNNKCQGPRKGRLAASMNNISFIEPKVSILEAYYKQLEGYFTLDFPTTPEKAYDFVNGAPNDIANDTQAANGTRAIVFEYGSRIQIIFQNTGTLTTENHPIHLHGHSFYVIGYGTGNYDQQTAKFNLEDPPYLNTIGVPVGGWAAIRFVANNPGLWLLHCHFDIHQTWGMSTMFIVKNGKKVQESLPHPPADLPKC</sequence>
<keyword id="KW-0025">Alternative splicing</keyword>
<keyword id="KW-0052">Apoplast</keyword>
<keyword id="KW-0186">Copper</keyword>
<keyword id="KW-0325">Glycoprotein</keyword>
<keyword id="KW-0439">Lignin degradation</keyword>
<keyword id="KW-0479">Metal-binding</keyword>
<keyword id="KW-0560">Oxidoreductase</keyword>
<keyword id="KW-1185">Reference proteome</keyword>
<keyword id="KW-0677">Repeat</keyword>
<keyword id="KW-0964">Secreted</keyword>
<keyword id="KW-0732">Signal</keyword>